<name>SYH_ALIF1</name>
<reference key="1">
    <citation type="journal article" date="2005" name="Proc. Natl. Acad. Sci. U.S.A.">
        <title>Complete genome sequence of Vibrio fischeri: a symbiotic bacterium with pathogenic congeners.</title>
        <authorList>
            <person name="Ruby E.G."/>
            <person name="Urbanowski M."/>
            <person name="Campbell J."/>
            <person name="Dunn A."/>
            <person name="Faini M."/>
            <person name="Gunsalus R."/>
            <person name="Lostroh P."/>
            <person name="Lupp C."/>
            <person name="McCann J."/>
            <person name="Millikan D."/>
            <person name="Schaefer A."/>
            <person name="Stabb E."/>
            <person name="Stevens A."/>
            <person name="Visick K."/>
            <person name="Whistler C."/>
            <person name="Greenberg E.P."/>
        </authorList>
    </citation>
    <scope>NUCLEOTIDE SEQUENCE [LARGE SCALE GENOMIC DNA]</scope>
    <source>
        <strain>ATCC 700601 / ES114</strain>
    </source>
</reference>
<evidence type="ECO:0000255" key="1">
    <source>
        <dbReference type="HAMAP-Rule" id="MF_00127"/>
    </source>
</evidence>
<sequence length="422" mass="47237">MAKTIQAIRGMNDCLPTQSPLWQKVEGSVKRVISAYGYNEVRMPIVEQTHLFKRAIGEVTDVVEKEMYTFEDRNGDSLTLRPEGTAGCVRAGIENGLLYNQEQRLWYMGPMFRHERPQKGRYRQFHQVGVEVFGLNGPDVDAELIMMTARLWRELGIDQHVRLELNSIGSLEARANYRTALVAFLEQHLDVLDEDCKRRMHTNPMRVLDTKNPDVQAILGDAPKLSEYLDDDSKAHFSGLCELLDAAGIQYQVNERLVRGLDYYNRTVFEWITESLGAQGTVCGGGRYDGLVEQLGGKTTPAVGFAMGLERLVLLMETLELTDVRRSVDVYMVTAGEGTLMAGMKLAESLREQVPGLRVMCHFGGGNFKKQFKRADNAGAAVALILGETEVAEQTVNVKDLRNGEQVTLPQSDVFTKLAELI</sequence>
<comment type="catalytic activity">
    <reaction evidence="1">
        <text>tRNA(His) + L-histidine + ATP = L-histidyl-tRNA(His) + AMP + diphosphate + H(+)</text>
        <dbReference type="Rhea" id="RHEA:17313"/>
        <dbReference type="Rhea" id="RHEA-COMP:9665"/>
        <dbReference type="Rhea" id="RHEA-COMP:9689"/>
        <dbReference type="ChEBI" id="CHEBI:15378"/>
        <dbReference type="ChEBI" id="CHEBI:30616"/>
        <dbReference type="ChEBI" id="CHEBI:33019"/>
        <dbReference type="ChEBI" id="CHEBI:57595"/>
        <dbReference type="ChEBI" id="CHEBI:78442"/>
        <dbReference type="ChEBI" id="CHEBI:78527"/>
        <dbReference type="ChEBI" id="CHEBI:456215"/>
        <dbReference type="EC" id="6.1.1.21"/>
    </reaction>
</comment>
<comment type="subunit">
    <text evidence="1">Homodimer.</text>
</comment>
<comment type="subcellular location">
    <subcellularLocation>
        <location evidence="1">Cytoplasm</location>
    </subcellularLocation>
</comment>
<comment type="similarity">
    <text evidence="1">Belongs to the class-II aminoacyl-tRNA synthetase family.</text>
</comment>
<gene>
    <name evidence="1" type="primary">hisS</name>
    <name type="ordered locus">VF_0630</name>
</gene>
<protein>
    <recommendedName>
        <fullName evidence="1">Histidine--tRNA ligase</fullName>
        <ecNumber evidence="1">6.1.1.21</ecNumber>
    </recommendedName>
    <alternativeName>
        <fullName evidence="1">Histidyl-tRNA synthetase</fullName>
        <shortName evidence="1">HisRS</shortName>
    </alternativeName>
</protein>
<feature type="chain" id="PRO_0000136291" description="Histidine--tRNA ligase">
    <location>
        <begin position="1"/>
        <end position="422"/>
    </location>
</feature>
<keyword id="KW-0030">Aminoacyl-tRNA synthetase</keyword>
<keyword id="KW-0067">ATP-binding</keyword>
<keyword id="KW-0963">Cytoplasm</keyword>
<keyword id="KW-0436">Ligase</keyword>
<keyword id="KW-0547">Nucleotide-binding</keyword>
<keyword id="KW-0648">Protein biosynthesis</keyword>
<keyword id="KW-1185">Reference proteome</keyword>
<dbReference type="EC" id="6.1.1.21" evidence="1"/>
<dbReference type="EMBL" id="CP000020">
    <property type="protein sequence ID" value="AAW85125.1"/>
    <property type="molecule type" value="Genomic_DNA"/>
</dbReference>
<dbReference type="RefSeq" id="WP_005417932.1">
    <property type="nucleotide sequence ID" value="NZ_CAWLES010000001.1"/>
</dbReference>
<dbReference type="RefSeq" id="YP_204013.1">
    <property type="nucleotide sequence ID" value="NC_006840.2"/>
</dbReference>
<dbReference type="SMR" id="Q5E771"/>
<dbReference type="STRING" id="312309.VF_0630"/>
<dbReference type="EnsemblBacteria" id="AAW85125">
    <property type="protein sequence ID" value="AAW85125"/>
    <property type="gene ID" value="VF_0630"/>
</dbReference>
<dbReference type="GeneID" id="54163283"/>
<dbReference type="KEGG" id="vfi:VF_0630"/>
<dbReference type="PATRIC" id="fig|312309.11.peg.622"/>
<dbReference type="eggNOG" id="COG0124">
    <property type="taxonomic scope" value="Bacteria"/>
</dbReference>
<dbReference type="HOGENOM" id="CLU_025113_1_1_6"/>
<dbReference type="OrthoDB" id="9800814at2"/>
<dbReference type="Proteomes" id="UP000000537">
    <property type="component" value="Chromosome I"/>
</dbReference>
<dbReference type="GO" id="GO:0005737">
    <property type="term" value="C:cytoplasm"/>
    <property type="evidence" value="ECO:0007669"/>
    <property type="project" value="UniProtKB-SubCell"/>
</dbReference>
<dbReference type="GO" id="GO:0005524">
    <property type="term" value="F:ATP binding"/>
    <property type="evidence" value="ECO:0007669"/>
    <property type="project" value="UniProtKB-UniRule"/>
</dbReference>
<dbReference type="GO" id="GO:0004821">
    <property type="term" value="F:histidine-tRNA ligase activity"/>
    <property type="evidence" value="ECO:0007669"/>
    <property type="project" value="UniProtKB-UniRule"/>
</dbReference>
<dbReference type="GO" id="GO:0006427">
    <property type="term" value="P:histidyl-tRNA aminoacylation"/>
    <property type="evidence" value="ECO:0007669"/>
    <property type="project" value="UniProtKB-UniRule"/>
</dbReference>
<dbReference type="CDD" id="cd00773">
    <property type="entry name" value="HisRS-like_core"/>
    <property type="match status" value="1"/>
</dbReference>
<dbReference type="CDD" id="cd00859">
    <property type="entry name" value="HisRS_anticodon"/>
    <property type="match status" value="1"/>
</dbReference>
<dbReference type="FunFam" id="3.30.930.10:FF:000005">
    <property type="entry name" value="Histidine--tRNA ligase"/>
    <property type="match status" value="1"/>
</dbReference>
<dbReference type="Gene3D" id="3.40.50.800">
    <property type="entry name" value="Anticodon-binding domain"/>
    <property type="match status" value="1"/>
</dbReference>
<dbReference type="Gene3D" id="3.30.930.10">
    <property type="entry name" value="Bira Bifunctional Protein, Domain 2"/>
    <property type="match status" value="1"/>
</dbReference>
<dbReference type="HAMAP" id="MF_00127">
    <property type="entry name" value="His_tRNA_synth"/>
    <property type="match status" value="1"/>
</dbReference>
<dbReference type="InterPro" id="IPR006195">
    <property type="entry name" value="aa-tRNA-synth_II"/>
</dbReference>
<dbReference type="InterPro" id="IPR045864">
    <property type="entry name" value="aa-tRNA-synth_II/BPL/LPL"/>
</dbReference>
<dbReference type="InterPro" id="IPR004154">
    <property type="entry name" value="Anticodon-bd"/>
</dbReference>
<dbReference type="InterPro" id="IPR036621">
    <property type="entry name" value="Anticodon-bd_dom_sf"/>
</dbReference>
<dbReference type="InterPro" id="IPR015807">
    <property type="entry name" value="His-tRNA-ligase"/>
</dbReference>
<dbReference type="InterPro" id="IPR041715">
    <property type="entry name" value="HisRS-like_core"/>
</dbReference>
<dbReference type="InterPro" id="IPR004516">
    <property type="entry name" value="HisRS/HisZ"/>
</dbReference>
<dbReference type="InterPro" id="IPR033656">
    <property type="entry name" value="HisRS_anticodon"/>
</dbReference>
<dbReference type="NCBIfam" id="TIGR00442">
    <property type="entry name" value="hisS"/>
    <property type="match status" value="1"/>
</dbReference>
<dbReference type="PANTHER" id="PTHR43707:SF1">
    <property type="entry name" value="HISTIDINE--TRNA LIGASE, MITOCHONDRIAL-RELATED"/>
    <property type="match status" value="1"/>
</dbReference>
<dbReference type="PANTHER" id="PTHR43707">
    <property type="entry name" value="HISTIDYL-TRNA SYNTHETASE"/>
    <property type="match status" value="1"/>
</dbReference>
<dbReference type="Pfam" id="PF03129">
    <property type="entry name" value="HGTP_anticodon"/>
    <property type="match status" value="1"/>
</dbReference>
<dbReference type="Pfam" id="PF13393">
    <property type="entry name" value="tRNA-synt_His"/>
    <property type="match status" value="1"/>
</dbReference>
<dbReference type="PIRSF" id="PIRSF001549">
    <property type="entry name" value="His-tRNA_synth"/>
    <property type="match status" value="1"/>
</dbReference>
<dbReference type="SUPFAM" id="SSF52954">
    <property type="entry name" value="Class II aaRS ABD-related"/>
    <property type="match status" value="1"/>
</dbReference>
<dbReference type="SUPFAM" id="SSF55681">
    <property type="entry name" value="Class II aaRS and biotin synthetases"/>
    <property type="match status" value="1"/>
</dbReference>
<dbReference type="PROSITE" id="PS50862">
    <property type="entry name" value="AA_TRNA_LIGASE_II"/>
    <property type="match status" value="1"/>
</dbReference>
<organism>
    <name type="scientific">Aliivibrio fischeri (strain ATCC 700601 / ES114)</name>
    <name type="common">Vibrio fischeri</name>
    <dbReference type="NCBI Taxonomy" id="312309"/>
    <lineage>
        <taxon>Bacteria</taxon>
        <taxon>Pseudomonadati</taxon>
        <taxon>Pseudomonadota</taxon>
        <taxon>Gammaproteobacteria</taxon>
        <taxon>Vibrionales</taxon>
        <taxon>Vibrionaceae</taxon>
        <taxon>Aliivibrio</taxon>
    </lineage>
</organism>
<proteinExistence type="inferred from homology"/>
<accession>Q5E771</accession>